<comment type="function">
    <text evidence="1">Participates actively in the response to hyperosmotic and heat shock by preventing the aggregation of stress-denatured proteins, in association with DnaK and GrpE. It is the nucleotide exchange factor for DnaK and may function as a thermosensor. Unfolded proteins bind initially to DnaJ; upon interaction with the DnaJ-bound protein, DnaK hydrolyzes its bound ATP, resulting in the formation of a stable complex. GrpE releases ADP from DnaK; ATP binding to DnaK triggers the release of the substrate protein, thus completing the reaction cycle. Several rounds of ATP-dependent interactions between DnaJ, DnaK and GrpE are required for fully efficient folding.</text>
</comment>
<comment type="subunit">
    <text evidence="1">Homodimer.</text>
</comment>
<comment type="subcellular location">
    <subcellularLocation>
        <location evidence="1">Cytoplasm</location>
    </subcellularLocation>
</comment>
<comment type="similarity">
    <text evidence="1">Belongs to the GrpE family.</text>
</comment>
<dbReference type="EMBL" id="CP000847">
    <property type="protein sequence ID" value="ABV75245.1"/>
    <property type="molecule type" value="Genomic_DNA"/>
</dbReference>
<dbReference type="RefSeq" id="WP_012149875.1">
    <property type="nucleotide sequence ID" value="NC_009881.1"/>
</dbReference>
<dbReference type="SMR" id="A8GPC0"/>
<dbReference type="STRING" id="293614.A1C_04955"/>
<dbReference type="KEGG" id="rak:A1C_04955"/>
<dbReference type="eggNOG" id="COG0576">
    <property type="taxonomic scope" value="Bacteria"/>
</dbReference>
<dbReference type="HOGENOM" id="CLU_057217_6_2_5"/>
<dbReference type="Proteomes" id="UP000006830">
    <property type="component" value="Chromosome"/>
</dbReference>
<dbReference type="GO" id="GO:0005737">
    <property type="term" value="C:cytoplasm"/>
    <property type="evidence" value="ECO:0007669"/>
    <property type="project" value="UniProtKB-SubCell"/>
</dbReference>
<dbReference type="GO" id="GO:0000774">
    <property type="term" value="F:adenyl-nucleotide exchange factor activity"/>
    <property type="evidence" value="ECO:0007669"/>
    <property type="project" value="InterPro"/>
</dbReference>
<dbReference type="GO" id="GO:0042803">
    <property type="term" value="F:protein homodimerization activity"/>
    <property type="evidence" value="ECO:0007669"/>
    <property type="project" value="InterPro"/>
</dbReference>
<dbReference type="GO" id="GO:0051087">
    <property type="term" value="F:protein-folding chaperone binding"/>
    <property type="evidence" value="ECO:0007669"/>
    <property type="project" value="InterPro"/>
</dbReference>
<dbReference type="GO" id="GO:0051082">
    <property type="term" value="F:unfolded protein binding"/>
    <property type="evidence" value="ECO:0007669"/>
    <property type="project" value="TreeGrafter"/>
</dbReference>
<dbReference type="GO" id="GO:0006457">
    <property type="term" value="P:protein folding"/>
    <property type="evidence" value="ECO:0007669"/>
    <property type="project" value="InterPro"/>
</dbReference>
<dbReference type="GO" id="GO:0030150">
    <property type="term" value="P:protein import into mitochondrial matrix"/>
    <property type="evidence" value="ECO:0007669"/>
    <property type="project" value="TreeGrafter"/>
</dbReference>
<dbReference type="CDD" id="cd00446">
    <property type="entry name" value="GrpE"/>
    <property type="match status" value="1"/>
</dbReference>
<dbReference type="FunFam" id="2.30.22.10:FF:000001">
    <property type="entry name" value="Protein GrpE"/>
    <property type="match status" value="1"/>
</dbReference>
<dbReference type="Gene3D" id="3.90.20.20">
    <property type="match status" value="1"/>
</dbReference>
<dbReference type="Gene3D" id="2.30.22.10">
    <property type="entry name" value="Head domain of nucleotide exchange factor GrpE"/>
    <property type="match status" value="1"/>
</dbReference>
<dbReference type="HAMAP" id="MF_01151">
    <property type="entry name" value="GrpE"/>
    <property type="match status" value="1"/>
</dbReference>
<dbReference type="InterPro" id="IPR000740">
    <property type="entry name" value="GrpE"/>
</dbReference>
<dbReference type="InterPro" id="IPR013805">
    <property type="entry name" value="GrpE_coiled_coil"/>
</dbReference>
<dbReference type="InterPro" id="IPR009012">
    <property type="entry name" value="GrpE_head"/>
</dbReference>
<dbReference type="NCBIfam" id="NF010758">
    <property type="entry name" value="PRK14161.1"/>
    <property type="match status" value="1"/>
</dbReference>
<dbReference type="PANTHER" id="PTHR21237">
    <property type="entry name" value="GRPE PROTEIN"/>
    <property type="match status" value="1"/>
</dbReference>
<dbReference type="PANTHER" id="PTHR21237:SF23">
    <property type="entry name" value="GRPE PROTEIN HOMOLOG, MITOCHONDRIAL"/>
    <property type="match status" value="1"/>
</dbReference>
<dbReference type="Pfam" id="PF01025">
    <property type="entry name" value="GrpE"/>
    <property type="match status" value="1"/>
</dbReference>
<dbReference type="PRINTS" id="PR00773">
    <property type="entry name" value="GRPEPROTEIN"/>
</dbReference>
<dbReference type="SUPFAM" id="SSF58014">
    <property type="entry name" value="Coiled-coil domain of nucleotide exchange factor GrpE"/>
    <property type="match status" value="1"/>
</dbReference>
<dbReference type="SUPFAM" id="SSF51064">
    <property type="entry name" value="Head domain of nucleotide exchange factor GrpE"/>
    <property type="match status" value="1"/>
</dbReference>
<dbReference type="PROSITE" id="PS01071">
    <property type="entry name" value="GRPE"/>
    <property type="match status" value="1"/>
</dbReference>
<name>GRPE_RICAH</name>
<keyword id="KW-0143">Chaperone</keyword>
<keyword id="KW-0963">Cytoplasm</keyword>
<keyword id="KW-0346">Stress response</keyword>
<gene>
    <name evidence="1" type="primary">grpE</name>
    <name type="ordered locus">A1C_04955</name>
</gene>
<reference key="1">
    <citation type="submission" date="2007-09" db="EMBL/GenBank/DDBJ databases">
        <title>Complete genome sequence of Rickettsia akari.</title>
        <authorList>
            <person name="Madan A."/>
            <person name="Fahey J."/>
            <person name="Helton E."/>
            <person name="Ketteman M."/>
            <person name="Madan A."/>
            <person name="Rodrigues S."/>
            <person name="Sanchez A."/>
            <person name="Whiting M."/>
            <person name="Dasch G."/>
            <person name="Eremeeva M."/>
        </authorList>
    </citation>
    <scope>NUCLEOTIDE SEQUENCE [LARGE SCALE GENOMIC DNA]</scope>
    <source>
        <strain>Hartford</strain>
    </source>
</reference>
<protein>
    <recommendedName>
        <fullName evidence="1">Protein GrpE</fullName>
    </recommendedName>
    <alternativeName>
        <fullName evidence="1">HSP-70 cofactor</fullName>
    </alternativeName>
</protein>
<accession>A8GPC0</accession>
<feature type="chain" id="PRO_1000137605" description="Protein GrpE">
    <location>
        <begin position="1"/>
        <end position="178"/>
    </location>
</feature>
<sequence>MIDDNIENNEQTINDIAEEIVEKANPEITELKAEIEELKDRLIRTTAEIDNTRKRLEKARDEAKDYAIATFAKELLNVSDNLSRALAHKPANSDIEVTNIIAGVQMTKDELDKIFHRHHIEEIKPEIGSMFDYNLHNAISQIEHPDHEPNSIITLMQSGYKIRDRLLRPATVQVAKKS</sequence>
<organism>
    <name type="scientific">Rickettsia akari (strain Hartford)</name>
    <dbReference type="NCBI Taxonomy" id="293614"/>
    <lineage>
        <taxon>Bacteria</taxon>
        <taxon>Pseudomonadati</taxon>
        <taxon>Pseudomonadota</taxon>
        <taxon>Alphaproteobacteria</taxon>
        <taxon>Rickettsiales</taxon>
        <taxon>Rickettsiaceae</taxon>
        <taxon>Rickettsieae</taxon>
        <taxon>Rickettsia</taxon>
        <taxon>spotted fever group</taxon>
    </lineage>
</organism>
<evidence type="ECO:0000255" key="1">
    <source>
        <dbReference type="HAMAP-Rule" id="MF_01151"/>
    </source>
</evidence>
<proteinExistence type="inferred from homology"/>